<accession>P84320</accession>
<accession>P55276</accession>
<comment type="function">
    <text>This protein promotes the GTP-dependent binding of aminoacyl-tRNA to the A-site of ribosomes during protein biosynthesis.</text>
</comment>
<comment type="subcellular location">
    <subcellularLocation>
        <location>Cytoplasm</location>
    </subcellularLocation>
</comment>
<comment type="similarity">
    <text evidence="2">Belongs to the TRAFAC class translation factor GTPase superfamily. Classic translation factor GTPase family. EF-Tu/EF-1A subfamily.</text>
</comment>
<keyword id="KW-0963">Cytoplasm</keyword>
<keyword id="KW-0251">Elongation factor</keyword>
<keyword id="KW-0342">GTP-binding</keyword>
<keyword id="KW-0547">Nucleotide-binding</keyword>
<keyword id="KW-0597">Phosphoprotein</keyword>
<keyword id="KW-0648">Protein biosynthesis</keyword>
<sequence length="413" mass="45120">HVDSGKSTTTGHLIYKCGGIDKRTIEKFEKEAQEMGKGSFKYAWVLDKLKAERERGITIDIALWKFETAKYYVTIIDAPGHRDFIKNMITGTSQADCAVLIVAAGTGEFEAGISKNGQTREHALLAFTLGVKQLIVGVNKMDSTEPPYSESRFEEIKKEVSSYIKKIGYNPAAVAFVPISGWHGDNMLEASTKMPWFKGWNVERKEGKAEGKCLIEALDAILPPARPTDKALRLPLQDVYKIGGIGTVPVGRVETGILKPGTIVVFAPANITTEVKSVEMHHEALQEAVPGDNVGFNVKNVSVKELRRGYVAGDSKNNPPKGAADFTAQVIVLNHPGQISNGYTPVLDCHTAHIACKFAEIKEKVDRRTGKSTEDNPKSIKSGDAAIVNLVPSKPLCVESFQEFPPLGRFAVR</sequence>
<name>EF1A_HELDI</name>
<dbReference type="EMBL" id="U20131">
    <property type="protein sequence ID" value="AAA93211.1"/>
    <property type="molecule type" value="Genomic_DNA"/>
</dbReference>
<dbReference type="SMR" id="P84320"/>
<dbReference type="GO" id="GO:0005737">
    <property type="term" value="C:cytoplasm"/>
    <property type="evidence" value="ECO:0007669"/>
    <property type="project" value="UniProtKB-SubCell"/>
</dbReference>
<dbReference type="GO" id="GO:0005525">
    <property type="term" value="F:GTP binding"/>
    <property type="evidence" value="ECO:0007669"/>
    <property type="project" value="UniProtKB-KW"/>
</dbReference>
<dbReference type="GO" id="GO:0003924">
    <property type="term" value="F:GTPase activity"/>
    <property type="evidence" value="ECO:0007669"/>
    <property type="project" value="InterPro"/>
</dbReference>
<dbReference type="GO" id="GO:0003746">
    <property type="term" value="F:translation elongation factor activity"/>
    <property type="evidence" value="ECO:0007669"/>
    <property type="project" value="UniProtKB-KW"/>
</dbReference>
<dbReference type="CDD" id="cd01883">
    <property type="entry name" value="EF1_alpha"/>
    <property type="match status" value="1"/>
</dbReference>
<dbReference type="CDD" id="cd03693">
    <property type="entry name" value="EF1_alpha_II"/>
    <property type="match status" value="1"/>
</dbReference>
<dbReference type="CDD" id="cd03705">
    <property type="entry name" value="EF1_alpha_III"/>
    <property type="match status" value="1"/>
</dbReference>
<dbReference type="FunFam" id="2.40.30.10:FF:000003">
    <property type="entry name" value="Elongation factor 1-alpha"/>
    <property type="match status" value="1"/>
</dbReference>
<dbReference type="FunFam" id="2.40.30.10:FF:000005">
    <property type="entry name" value="Elongation factor 1-alpha"/>
    <property type="match status" value="1"/>
</dbReference>
<dbReference type="FunFam" id="3.40.50.300:FF:000090">
    <property type="entry name" value="Elongation factor 1-alpha"/>
    <property type="match status" value="1"/>
</dbReference>
<dbReference type="Gene3D" id="3.40.50.300">
    <property type="entry name" value="P-loop containing nucleotide triphosphate hydrolases"/>
    <property type="match status" value="1"/>
</dbReference>
<dbReference type="Gene3D" id="2.40.30.10">
    <property type="entry name" value="Translation factors"/>
    <property type="match status" value="2"/>
</dbReference>
<dbReference type="InterPro" id="IPR004161">
    <property type="entry name" value="EFTu-like_2"/>
</dbReference>
<dbReference type="InterPro" id="IPR031157">
    <property type="entry name" value="G_TR_CS"/>
</dbReference>
<dbReference type="InterPro" id="IPR054696">
    <property type="entry name" value="GTP-eEF1A_C"/>
</dbReference>
<dbReference type="InterPro" id="IPR027417">
    <property type="entry name" value="P-loop_NTPase"/>
</dbReference>
<dbReference type="InterPro" id="IPR000795">
    <property type="entry name" value="T_Tr_GTP-bd_dom"/>
</dbReference>
<dbReference type="InterPro" id="IPR050100">
    <property type="entry name" value="TRAFAC_GTPase_members"/>
</dbReference>
<dbReference type="InterPro" id="IPR009000">
    <property type="entry name" value="Transl_B-barrel_sf"/>
</dbReference>
<dbReference type="InterPro" id="IPR009001">
    <property type="entry name" value="Transl_elong_EF1A/Init_IF2_C"/>
</dbReference>
<dbReference type="InterPro" id="IPR004539">
    <property type="entry name" value="Transl_elong_EF1A_euk/arc"/>
</dbReference>
<dbReference type="NCBIfam" id="TIGR00483">
    <property type="entry name" value="EF-1_alpha"/>
    <property type="match status" value="1"/>
</dbReference>
<dbReference type="NCBIfam" id="NF008969">
    <property type="entry name" value="PRK12317.1"/>
    <property type="match status" value="1"/>
</dbReference>
<dbReference type="PANTHER" id="PTHR23115">
    <property type="entry name" value="TRANSLATION FACTOR"/>
    <property type="match status" value="1"/>
</dbReference>
<dbReference type="Pfam" id="PF22594">
    <property type="entry name" value="GTP-eEF1A_C"/>
    <property type="match status" value="1"/>
</dbReference>
<dbReference type="Pfam" id="PF00009">
    <property type="entry name" value="GTP_EFTU"/>
    <property type="match status" value="1"/>
</dbReference>
<dbReference type="Pfam" id="PF03144">
    <property type="entry name" value="GTP_EFTU_D2"/>
    <property type="match status" value="1"/>
</dbReference>
<dbReference type="PRINTS" id="PR00315">
    <property type="entry name" value="ELONGATNFCT"/>
</dbReference>
<dbReference type="SUPFAM" id="SSF50465">
    <property type="entry name" value="EF-Tu/eEF-1alpha/eIF2-gamma C-terminal domain"/>
    <property type="match status" value="1"/>
</dbReference>
<dbReference type="SUPFAM" id="SSF52540">
    <property type="entry name" value="P-loop containing nucleoside triphosphate hydrolases"/>
    <property type="match status" value="1"/>
</dbReference>
<dbReference type="SUPFAM" id="SSF50447">
    <property type="entry name" value="Translation proteins"/>
    <property type="match status" value="1"/>
</dbReference>
<dbReference type="PROSITE" id="PS00301">
    <property type="entry name" value="G_TR_1"/>
    <property type="match status" value="1"/>
</dbReference>
<dbReference type="PROSITE" id="PS51722">
    <property type="entry name" value="G_TR_2"/>
    <property type="match status" value="1"/>
</dbReference>
<reference key="1">
    <citation type="journal article" date="1995" name="Mol. Biol. Evol.">
        <title>A highly conserved nuclear gene for low-level phylogenetics: elongation factor-1 alpha recovers morphology-based tree for heliothine moths.</title>
        <authorList>
            <person name="Cho S."/>
            <person name="Mitchell A."/>
            <person name="Regier J.C."/>
            <person name="Mitter C."/>
            <person name="Poole R.W."/>
            <person name="Friedlander T.P."/>
            <person name="Zhao S."/>
        </authorList>
    </citation>
    <scope>NUCLEOTIDE SEQUENCE [GENOMIC DNA]</scope>
</reference>
<protein>
    <recommendedName>
        <fullName>Elongation factor 1-alpha</fullName>
        <shortName>EF-1-alpha</shortName>
    </recommendedName>
</protein>
<evidence type="ECO:0000250" key="1"/>
<evidence type="ECO:0000255" key="2">
    <source>
        <dbReference type="PROSITE-ProRule" id="PRU01059"/>
    </source>
</evidence>
<proteinExistence type="inferred from homology"/>
<organism>
    <name type="scientific">Heliocheilus discalis</name>
    <name type="common">Moth</name>
    <dbReference type="NCBI Taxonomy" id="38052"/>
    <lineage>
        <taxon>Eukaryota</taxon>
        <taxon>Metazoa</taxon>
        <taxon>Ecdysozoa</taxon>
        <taxon>Arthropoda</taxon>
        <taxon>Hexapoda</taxon>
        <taxon>Insecta</taxon>
        <taxon>Pterygota</taxon>
        <taxon>Neoptera</taxon>
        <taxon>Endopterygota</taxon>
        <taxon>Lepidoptera</taxon>
        <taxon>Glossata</taxon>
        <taxon>Ditrysia</taxon>
        <taxon>Noctuoidea</taxon>
        <taxon>Noctuidae</taxon>
        <taxon>Heliothinae</taxon>
        <taxon>Heliocheilus</taxon>
    </lineage>
</organism>
<feature type="chain" id="PRO_0000090910" description="Elongation factor 1-alpha">
    <location>
        <begin position="1" status="less than"/>
        <end position="413" status="greater than"/>
    </location>
</feature>
<feature type="domain" description="tr-type G" evidence="2">
    <location>
        <begin position="1" status="less than"/>
        <end position="228"/>
    </location>
</feature>
<feature type="binding site" evidence="1">
    <location>
        <begin position="1" status="less than"/>
        <end position="7"/>
    </location>
    <ligand>
        <name>GTP</name>
        <dbReference type="ChEBI" id="CHEBI:37565"/>
    </ligand>
</feature>
<feature type="binding site" evidence="1">
    <location>
        <begin position="77"/>
        <end position="81"/>
    </location>
    <ligand>
        <name>GTP</name>
        <dbReference type="ChEBI" id="CHEBI:37565"/>
    </ligand>
</feature>
<feature type="binding site" evidence="1">
    <location>
        <begin position="139"/>
        <end position="142"/>
    </location>
    <ligand>
        <name>GTP</name>
        <dbReference type="ChEBI" id="CHEBI:37565"/>
    </ligand>
</feature>
<feature type="modified residue" description="5-glutamyl glycerylphosphorylethanolamine" evidence="1">
    <location>
        <position position="287"/>
    </location>
</feature>
<feature type="modified residue" description="5-glutamyl glycerylphosphorylethanolamine" evidence="1">
    <location>
        <position position="360"/>
    </location>
</feature>
<feature type="non-terminal residue">
    <location>
        <position position="1"/>
    </location>
</feature>
<feature type="non-terminal residue">
    <location>
        <position position="413"/>
    </location>
</feature>